<sequence>MERLTRWLLVMMAMLLAASGLVWFYNSNHLPVKQVSLKGNLVYSDKKTLGSLAKEYIHGNILRTDINGAQEAYRRYPWIASVMVRRRFPDTVEVVLTERKPVARWGDHALVDGEGNVFEARLDRPGMPVFRGAEGTSAEMLRRYDEFSTVLAKQGLGIKEMTYTARSAWIVVLDNGITVRLGRENEMKRLRLFTEAWQHLLRKNKNRLSYVDMRYKDGFSVRYASDGLPEKESEE</sequence>
<keyword id="KW-0131">Cell cycle</keyword>
<keyword id="KW-0132">Cell division</keyword>
<keyword id="KW-0997">Cell inner membrane</keyword>
<keyword id="KW-1003">Cell membrane</keyword>
<keyword id="KW-0472">Membrane</keyword>
<keyword id="KW-1185">Reference proteome</keyword>
<keyword id="KW-0812">Transmembrane</keyword>
<keyword id="KW-1133">Transmembrane helix</keyword>
<name>FTSQ_NEIMB</name>
<dbReference type="EMBL" id="AE002098">
    <property type="protein sequence ID" value="AAF40863.1"/>
    <property type="molecule type" value="Genomic_DNA"/>
</dbReference>
<dbReference type="PIR" id="D81201">
    <property type="entry name" value="D81201"/>
</dbReference>
<dbReference type="RefSeq" id="NP_273473.1">
    <property type="nucleotide sequence ID" value="NC_003112.2"/>
</dbReference>
<dbReference type="SMR" id="Q9K0X9"/>
<dbReference type="FunCoup" id="Q9K0X9">
    <property type="interactions" value="72"/>
</dbReference>
<dbReference type="STRING" id="122586.NMB0425"/>
<dbReference type="PaxDb" id="122586-NMB0425"/>
<dbReference type="KEGG" id="nme:NMB0425"/>
<dbReference type="PATRIC" id="fig|122586.8.peg.539"/>
<dbReference type="HOGENOM" id="CLU_064041_2_0_4"/>
<dbReference type="InParanoid" id="Q9K0X9"/>
<dbReference type="OrthoDB" id="9790370at2"/>
<dbReference type="Proteomes" id="UP000000425">
    <property type="component" value="Chromosome"/>
</dbReference>
<dbReference type="GO" id="GO:0032153">
    <property type="term" value="C:cell division site"/>
    <property type="evidence" value="ECO:0000318"/>
    <property type="project" value="GO_Central"/>
</dbReference>
<dbReference type="GO" id="GO:1990587">
    <property type="term" value="C:FtsQBL complex"/>
    <property type="evidence" value="ECO:0000318"/>
    <property type="project" value="GO_Central"/>
</dbReference>
<dbReference type="GO" id="GO:0005886">
    <property type="term" value="C:plasma membrane"/>
    <property type="evidence" value="ECO:0000318"/>
    <property type="project" value="GO_Central"/>
</dbReference>
<dbReference type="GO" id="GO:0000917">
    <property type="term" value="P:division septum assembly"/>
    <property type="evidence" value="ECO:0000318"/>
    <property type="project" value="GO_Central"/>
</dbReference>
<dbReference type="GO" id="GO:0043093">
    <property type="term" value="P:FtsZ-dependent cytokinesis"/>
    <property type="evidence" value="ECO:0000318"/>
    <property type="project" value="GO_Central"/>
</dbReference>
<dbReference type="Gene3D" id="3.40.50.11690">
    <property type="entry name" value="Cell division protein FtsQ/DivIB"/>
    <property type="match status" value="1"/>
</dbReference>
<dbReference type="Gene3D" id="3.10.20.310">
    <property type="entry name" value="membrane protein fhac"/>
    <property type="match status" value="1"/>
</dbReference>
<dbReference type="HAMAP" id="MF_00911">
    <property type="entry name" value="FtsQ_subfam"/>
    <property type="match status" value="1"/>
</dbReference>
<dbReference type="InterPro" id="IPR005548">
    <property type="entry name" value="Cell_div_FtsQ/DivIB_C"/>
</dbReference>
<dbReference type="InterPro" id="IPR026579">
    <property type="entry name" value="FtsQ"/>
</dbReference>
<dbReference type="InterPro" id="IPR045335">
    <property type="entry name" value="FtsQ_C_sf"/>
</dbReference>
<dbReference type="InterPro" id="IPR034746">
    <property type="entry name" value="POTRA"/>
</dbReference>
<dbReference type="InterPro" id="IPR013685">
    <property type="entry name" value="POTRA_FtsQ_type"/>
</dbReference>
<dbReference type="PANTHER" id="PTHR35851">
    <property type="entry name" value="CELL DIVISION PROTEIN FTSQ"/>
    <property type="match status" value="1"/>
</dbReference>
<dbReference type="PANTHER" id="PTHR35851:SF1">
    <property type="entry name" value="CELL DIVISION PROTEIN FTSQ"/>
    <property type="match status" value="1"/>
</dbReference>
<dbReference type="Pfam" id="PF03799">
    <property type="entry name" value="FtsQ_DivIB_C"/>
    <property type="match status" value="1"/>
</dbReference>
<dbReference type="Pfam" id="PF08478">
    <property type="entry name" value="POTRA_1"/>
    <property type="match status" value="1"/>
</dbReference>
<dbReference type="PROSITE" id="PS51779">
    <property type="entry name" value="POTRA"/>
    <property type="match status" value="1"/>
</dbReference>
<comment type="function">
    <text evidence="1">Essential cell division protein. May link together the upstream cell division proteins, which are predominantly cytoplasmic, with the downstream cell division proteins, which are predominantly periplasmic. May control correct divisome assembly.</text>
</comment>
<comment type="subunit">
    <text evidence="1">Part of a complex composed of FtsB, FtsL and FtsQ.</text>
</comment>
<comment type="subcellular location">
    <subcellularLocation>
        <location evidence="1">Cell inner membrane</location>
        <topology evidence="1">Single-pass type II membrane protein</topology>
    </subcellularLocation>
    <text evidence="1">Localizes to the division septum.</text>
</comment>
<comment type="similarity">
    <text evidence="1">Belongs to the FtsQ/DivIB family. FtsQ subfamily.</text>
</comment>
<gene>
    <name evidence="1" type="primary">ftsQ</name>
    <name type="ordered locus">NMB0425</name>
</gene>
<reference key="1">
    <citation type="journal article" date="2000" name="Science">
        <title>Complete genome sequence of Neisseria meningitidis serogroup B strain MC58.</title>
        <authorList>
            <person name="Tettelin H."/>
            <person name="Saunders N.J."/>
            <person name="Heidelberg J.F."/>
            <person name="Jeffries A.C."/>
            <person name="Nelson K.E."/>
            <person name="Eisen J.A."/>
            <person name="Ketchum K.A."/>
            <person name="Hood D.W."/>
            <person name="Peden J.F."/>
            <person name="Dodson R.J."/>
            <person name="Nelson W.C."/>
            <person name="Gwinn M.L."/>
            <person name="DeBoy R.T."/>
            <person name="Peterson J.D."/>
            <person name="Hickey E.K."/>
            <person name="Haft D.H."/>
            <person name="Salzberg S.L."/>
            <person name="White O."/>
            <person name="Fleischmann R.D."/>
            <person name="Dougherty B.A."/>
            <person name="Mason T.M."/>
            <person name="Ciecko A."/>
            <person name="Parksey D.S."/>
            <person name="Blair E."/>
            <person name="Cittone H."/>
            <person name="Clark E.B."/>
            <person name="Cotton M.D."/>
            <person name="Utterback T.R."/>
            <person name="Khouri H.M."/>
            <person name="Qin H."/>
            <person name="Vamathevan J.J."/>
            <person name="Gill J."/>
            <person name="Scarlato V."/>
            <person name="Masignani V."/>
            <person name="Pizza M."/>
            <person name="Grandi G."/>
            <person name="Sun L."/>
            <person name="Smith H.O."/>
            <person name="Fraser C.M."/>
            <person name="Moxon E.R."/>
            <person name="Rappuoli R."/>
            <person name="Venter J.C."/>
        </authorList>
    </citation>
    <scope>NUCLEOTIDE SEQUENCE [LARGE SCALE GENOMIC DNA]</scope>
    <source>
        <strain>ATCC BAA-335 / MC58</strain>
    </source>
</reference>
<feature type="chain" id="PRO_0000414682" description="Cell division protein FtsQ">
    <location>
        <begin position="1"/>
        <end position="235"/>
    </location>
</feature>
<feature type="topological domain" description="Cytoplasmic" evidence="1">
    <location>
        <begin position="1"/>
        <end position="6"/>
    </location>
</feature>
<feature type="transmembrane region" description="Helical" evidence="1">
    <location>
        <begin position="7"/>
        <end position="25"/>
    </location>
</feature>
<feature type="topological domain" description="Periplasmic" evidence="1">
    <location>
        <begin position="26"/>
        <end position="235"/>
    </location>
</feature>
<feature type="domain" description="POTRA" evidence="2">
    <location>
        <begin position="30"/>
        <end position="99"/>
    </location>
</feature>
<organism>
    <name type="scientific">Neisseria meningitidis serogroup B (strain ATCC BAA-335 / MC58)</name>
    <dbReference type="NCBI Taxonomy" id="122586"/>
    <lineage>
        <taxon>Bacteria</taxon>
        <taxon>Pseudomonadati</taxon>
        <taxon>Pseudomonadota</taxon>
        <taxon>Betaproteobacteria</taxon>
        <taxon>Neisseriales</taxon>
        <taxon>Neisseriaceae</taxon>
        <taxon>Neisseria</taxon>
    </lineage>
</organism>
<accession>Q9K0X9</accession>
<proteinExistence type="inferred from homology"/>
<evidence type="ECO:0000255" key="1">
    <source>
        <dbReference type="HAMAP-Rule" id="MF_00911"/>
    </source>
</evidence>
<evidence type="ECO:0000255" key="2">
    <source>
        <dbReference type="PROSITE-ProRule" id="PRU01115"/>
    </source>
</evidence>
<protein>
    <recommendedName>
        <fullName evidence="1">Cell division protein FtsQ</fullName>
    </recommendedName>
</protein>